<reference key="1">
    <citation type="journal article" date="1998" name="Sci. Hortic.">
        <title>Phylogenetic analyses of the genus Rosa using the matK sequence: molecular evidence for the narrow genetic background of modern roses.</title>
        <authorList>
            <person name="Matsumoto S."/>
            <person name="Kouchi M."/>
            <person name="Yabuki J."/>
            <person name="Kusunoki M."/>
            <person name="Ueda Y."/>
            <person name="Fukui H."/>
        </authorList>
    </citation>
    <scope>NUCLEOTIDE SEQUENCE [GENOMIC DNA]</scope>
    <source>
        <tissue>Leaf</tissue>
    </source>
</reference>
<dbReference type="EMBL" id="AB011983">
    <property type="protein sequence ID" value="BAA32758.1"/>
    <property type="molecule type" value="Genomic_DNA"/>
</dbReference>
<dbReference type="GO" id="GO:0009507">
    <property type="term" value="C:chloroplast"/>
    <property type="evidence" value="ECO:0007669"/>
    <property type="project" value="UniProtKB-SubCell"/>
</dbReference>
<dbReference type="GO" id="GO:0003723">
    <property type="term" value="F:RNA binding"/>
    <property type="evidence" value="ECO:0007669"/>
    <property type="project" value="UniProtKB-KW"/>
</dbReference>
<dbReference type="GO" id="GO:0006397">
    <property type="term" value="P:mRNA processing"/>
    <property type="evidence" value="ECO:0007669"/>
    <property type="project" value="UniProtKB-KW"/>
</dbReference>
<dbReference type="GO" id="GO:0008380">
    <property type="term" value="P:RNA splicing"/>
    <property type="evidence" value="ECO:0007669"/>
    <property type="project" value="UniProtKB-UniRule"/>
</dbReference>
<dbReference type="GO" id="GO:0008033">
    <property type="term" value="P:tRNA processing"/>
    <property type="evidence" value="ECO:0007669"/>
    <property type="project" value="UniProtKB-KW"/>
</dbReference>
<dbReference type="HAMAP" id="MF_01390">
    <property type="entry name" value="MatK"/>
    <property type="match status" value="1"/>
</dbReference>
<dbReference type="InterPro" id="IPR024937">
    <property type="entry name" value="Domain_X"/>
</dbReference>
<dbReference type="InterPro" id="IPR002866">
    <property type="entry name" value="Maturase_MatK"/>
</dbReference>
<dbReference type="InterPro" id="IPR024942">
    <property type="entry name" value="Maturase_MatK_N"/>
</dbReference>
<dbReference type="PANTHER" id="PTHR34811">
    <property type="entry name" value="MATURASE K"/>
    <property type="match status" value="1"/>
</dbReference>
<dbReference type="PANTHER" id="PTHR34811:SF1">
    <property type="entry name" value="MATURASE K"/>
    <property type="match status" value="1"/>
</dbReference>
<dbReference type="Pfam" id="PF01348">
    <property type="entry name" value="Intron_maturas2"/>
    <property type="match status" value="1"/>
</dbReference>
<dbReference type="Pfam" id="PF01824">
    <property type="entry name" value="MatK_N"/>
    <property type="match status" value="1"/>
</dbReference>
<evidence type="ECO:0000255" key="1">
    <source>
        <dbReference type="HAMAP-Rule" id="MF_01390"/>
    </source>
</evidence>
<geneLocation type="chloroplast"/>
<protein>
    <recommendedName>
        <fullName evidence="1">Maturase K</fullName>
    </recommendedName>
    <alternativeName>
        <fullName evidence="1">Intron maturase</fullName>
    </alternativeName>
</protein>
<proteinExistence type="inferred from homology"/>
<keyword id="KW-0150">Chloroplast</keyword>
<keyword id="KW-0507">mRNA processing</keyword>
<keyword id="KW-0934">Plastid</keyword>
<keyword id="KW-0694">RNA-binding</keyword>
<keyword id="KW-0819">tRNA processing</keyword>
<feature type="chain" id="PRO_0000143687" description="Maturase K">
    <location>
        <begin position="1"/>
        <end position="503"/>
    </location>
</feature>
<gene>
    <name evidence="1" type="primary">matK</name>
</gene>
<name>MATK_ROSCA</name>
<comment type="function">
    <text evidence="1">Usually encoded in the trnK tRNA gene intron. Probably assists in splicing its own and other chloroplast group II introns.</text>
</comment>
<comment type="subcellular location">
    <subcellularLocation>
        <location>Plastid</location>
        <location>Chloroplast</location>
    </subcellularLocation>
</comment>
<comment type="similarity">
    <text evidence="1">Belongs to the intron maturase 2 family. MatK subfamily.</text>
</comment>
<organism>
    <name type="scientific">Rosa carolina</name>
    <name type="common">Pasture rose</name>
    <dbReference type="NCBI Taxonomy" id="74638"/>
    <lineage>
        <taxon>Eukaryota</taxon>
        <taxon>Viridiplantae</taxon>
        <taxon>Streptophyta</taxon>
        <taxon>Embryophyta</taxon>
        <taxon>Tracheophyta</taxon>
        <taxon>Spermatophyta</taxon>
        <taxon>Magnoliopsida</taxon>
        <taxon>eudicotyledons</taxon>
        <taxon>Gunneridae</taxon>
        <taxon>Pentapetalae</taxon>
        <taxon>rosids</taxon>
        <taxon>fabids</taxon>
        <taxon>Rosales</taxon>
        <taxon>Rosaceae</taxon>
        <taxon>Rosoideae</taxon>
        <taxon>Rosoideae incertae sedis</taxon>
        <taxon>Rosa</taxon>
    </lineage>
</organism>
<accession>O78252</accession>
<sequence length="503" mass="59671">MEEFQGYLELYRSQQHDFLYPLIFREYIYALAHDRGLNRSVLLDNVGYDKKSSLLIIKRLISRMYQQNHFLISVNDSNQNKFFGYNKNLYSQIISEGFAVIVEIPFSLRLVSSLKETETVKSYNLRSIHSIFPFFEDKFPHLNYASDVLIPYPIHLEILVQTLRYCVKDPPSLHLLRLFLHEYYNWNTLITPKKSIFAKSNQRLFLLLYNSYVCEYESILLFLRNQSNHLRLTSSGILFERIRFYEKIKYPVEEVFANDFPATLWFFKDPFIQYVRYQGKSILASKDTPLLMNKWKYYLVHFWQCHFYVWSQPGRIHINQLSKHSFDFLGYLSSIRPNISVVRSQLLENSFLMDNAMKKLDTLFPIIPMIGSLAKVKFCNTSGHPISKSSWADSSDSDIIDRFVRIGGNLSHYYSGSSKKKSLYRIKYILRLSCVKTLARKHKSTVRTFLKRLGPKLLDEFFTEEEQIFSLLFPRTSSTLKRFYRGRIWYLDILCINDLVNHE</sequence>